<name>PESC_AJECN</name>
<keyword id="KW-0175">Coiled coil</keyword>
<keyword id="KW-0539">Nucleus</keyword>
<keyword id="KW-1185">Reference proteome</keyword>
<keyword id="KW-0690">Ribosome biogenesis</keyword>
<keyword id="KW-0698">rRNA processing</keyword>
<comment type="function">
    <text evidence="1">Component of the NOP7 complex, which is required for maturation of the 25S and 5.8S ribosomal RNAs and formation of the 60S ribosome.</text>
</comment>
<comment type="subunit">
    <text evidence="1">Component of the NOP7 complex, composed of ERB1, NOP7 and YTM1. The complex is held together by ERB1, which interacts with NOP7 via its N-terminal domain and with YTM1 via a high-affinity interaction between the seven-bladed beta-propeller domains of the 2 proteins. The NOP7 complex associates with the 66S pre-ribosome.</text>
</comment>
<comment type="subcellular location">
    <subcellularLocation>
        <location evidence="1">Nucleus</location>
        <location evidence="1">Nucleolus</location>
    </subcellularLocation>
    <subcellularLocation>
        <location evidence="1">Nucleus</location>
        <location evidence="1">Nucleoplasm</location>
    </subcellularLocation>
</comment>
<comment type="similarity">
    <text evidence="1">Belongs to the pescadillo family.</text>
</comment>
<comment type="sequence caution" evidence="3">
    <conflict type="erroneous initiation">
        <sequence resource="EMBL-CDS" id="EDN10445"/>
    </conflict>
</comment>
<protein>
    <recommendedName>
        <fullName evidence="1">Pescadillo homolog</fullName>
    </recommendedName>
    <alternativeName>
        <fullName evidence="1">Nucleolar protein 7 homolog</fullName>
    </alternativeName>
</protein>
<gene>
    <name evidence="1" type="primary">NOP7</name>
    <name type="ORF">HCAG_06248</name>
</gene>
<reference key="1">
    <citation type="journal article" date="2009" name="Genome Res.">
        <title>Comparative genomic analyses of the human fungal pathogens Coccidioides and their relatives.</title>
        <authorList>
            <person name="Sharpton T.J."/>
            <person name="Stajich J.E."/>
            <person name="Rounsley S.D."/>
            <person name="Gardner M.J."/>
            <person name="Wortman J.R."/>
            <person name="Jordar V.S."/>
            <person name="Maiti R."/>
            <person name="Kodira C.D."/>
            <person name="Neafsey D.E."/>
            <person name="Zeng Q."/>
            <person name="Hung C.-Y."/>
            <person name="McMahan C."/>
            <person name="Muszewska A."/>
            <person name="Grynberg M."/>
            <person name="Mandel M.A."/>
            <person name="Kellner E.M."/>
            <person name="Barker B.M."/>
            <person name="Galgiani J.N."/>
            <person name="Orbach M.J."/>
            <person name="Kirkland T.N."/>
            <person name="Cole G.T."/>
            <person name="Henn M.R."/>
            <person name="Birren B.W."/>
            <person name="Taylor J.W."/>
        </authorList>
    </citation>
    <scope>NUCLEOTIDE SEQUENCE [LARGE SCALE GENOMIC DNA]</scope>
    <source>
        <strain>NAm1 / WU24</strain>
    </source>
</reference>
<organism>
    <name type="scientific">Ajellomyces capsulatus (strain NAm1 / WU24)</name>
    <name type="common">Darling's disease fungus</name>
    <name type="synonym">Histoplasma capsulatum</name>
    <dbReference type="NCBI Taxonomy" id="2059318"/>
    <lineage>
        <taxon>Eukaryota</taxon>
        <taxon>Fungi</taxon>
        <taxon>Dikarya</taxon>
        <taxon>Ascomycota</taxon>
        <taxon>Pezizomycotina</taxon>
        <taxon>Eurotiomycetes</taxon>
        <taxon>Eurotiomycetidae</taxon>
        <taxon>Onygenales</taxon>
        <taxon>Ajellomycetaceae</taxon>
        <taxon>Histoplasma</taxon>
    </lineage>
</organism>
<proteinExistence type="inferred from homology"/>
<accession>A6RBB0</accession>
<dbReference type="EMBL" id="CH476661">
    <property type="protein sequence ID" value="EDN10445.1"/>
    <property type="status" value="ALT_INIT"/>
    <property type="molecule type" value="Genomic_DNA"/>
</dbReference>
<dbReference type="SMR" id="A6RBB0"/>
<dbReference type="STRING" id="339724.A6RBB0"/>
<dbReference type="KEGG" id="aje:HCAG_06248"/>
<dbReference type="HOGENOM" id="CLU_019619_1_1_1"/>
<dbReference type="OrthoDB" id="11036at299071"/>
<dbReference type="Proteomes" id="UP000009297">
    <property type="component" value="Unassembled WGS sequence"/>
</dbReference>
<dbReference type="GO" id="GO:0005654">
    <property type="term" value="C:nucleoplasm"/>
    <property type="evidence" value="ECO:0007669"/>
    <property type="project" value="UniProtKB-SubCell"/>
</dbReference>
<dbReference type="GO" id="GO:0070545">
    <property type="term" value="C:PeBoW complex"/>
    <property type="evidence" value="ECO:0007669"/>
    <property type="project" value="TreeGrafter"/>
</dbReference>
<dbReference type="GO" id="GO:0030687">
    <property type="term" value="C:preribosome, large subunit precursor"/>
    <property type="evidence" value="ECO:0007669"/>
    <property type="project" value="UniProtKB-UniRule"/>
</dbReference>
<dbReference type="GO" id="GO:0043021">
    <property type="term" value="F:ribonucleoprotein complex binding"/>
    <property type="evidence" value="ECO:0007669"/>
    <property type="project" value="UniProtKB-UniRule"/>
</dbReference>
<dbReference type="GO" id="GO:0003723">
    <property type="term" value="F:RNA binding"/>
    <property type="evidence" value="ECO:0007669"/>
    <property type="project" value="TreeGrafter"/>
</dbReference>
<dbReference type="GO" id="GO:0000466">
    <property type="term" value="P:maturation of 5.8S rRNA from tricistronic rRNA transcript (SSU-rRNA, 5.8S rRNA, LSU-rRNA)"/>
    <property type="evidence" value="ECO:0007669"/>
    <property type="project" value="UniProtKB-UniRule"/>
</dbReference>
<dbReference type="GO" id="GO:0000463">
    <property type="term" value="P:maturation of LSU-rRNA from tricistronic rRNA transcript (SSU-rRNA, 5.8S rRNA, LSU-rRNA)"/>
    <property type="evidence" value="ECO:0007669"/>
    <property type="project" value="UniProtKB-UniRule"/>
</dbReference>
<dbReference type="CDD" id="cd17709">
    <property type="entry name" value="BRCT_pescadillo_like"/>
    <property type="match status" value="1"/>
</dbReference>
<dbReference type="Gene3D" id="3.40.50.10190">
    <property type="entry name" value="BRCT domain"/>
    <property type="match status" value="1"/>
</dbReference>
<dbReference type="HAMAP" id="MF_03028">
    <property type="entry name" value="Pescadillo"/>
    <property type="match status" value="1"/>
</dbReference>
<dbReference type="InterPro" id="IPR001357">
    <property type="entry name" value="BRCT_dom"/>
</dbReference>
<dbReference type="InterPro" id="IPR036420">
    <property type="entry name" value="BRCT_dom_sf"/>
</dbReference>
<dbReference type="InterPro" id="IPR010613">
    <property type="entry name" value="PES"/>
</dbReference>
<dbReference type="PANTHER" id="PTHR12221">
    <property type="entry name" value="PESCADILLO - RELATED"/>
    <property type="match status" value="1"/>
</dbReference>
<dbReference type="PANTHER" id="PTHR12221:SF6">
    <property type="entry name" value="PESCADILLO HOMOLOG"/>
    <property type="match status" value="1"/>
</dbReference>
<dbReference type="Pfam" id="PF06732">
    <property type="entry name" value="Pescadillo_N"/>
    <property type="match status" value="1"/>
</dbReference>
<dbReference type="SUPFAM" id="SSF52113">
    <property type="entry name" value="BRCT domain"/>
    <property type="match status" value="1"/>
</dbReference>
<dbReference type="PROSITE" id="PS50172">
    <property type="entry name" value="BRCT"/>
    <property type="match status" value="1"/>
</dbReference>
<evidence type="ECO:0000255" key="1">
    <source>
        <dbReference type="HAMAP-Rule" id="MF_03028"/>
    </source>
</evidence>
<evidence type="ECO:0000256" key="2">
    <source>
        <dbReference type="SAM" id="MobiDB-lite"/>
    </source>
</evidence>
<evidence type="ECO:0000305" key="3"/>
<feature type="chain" id="PRO_0000370476" description="Pescadillo homolog">
    <location>
        <begin position="1"/>
        <end position="723"/>
    </location>
</feature>
<feature type="domain" description="BRCT" evidence="1">
    <location>
        <begin position="380"/>
        <end position="497"/>
    </location>
</feature>
<feature type="region of interest" description="Disordered" evidence="2">
    <location>
        <begin position="440"/>
        <end position="471"/>
    </location>
</feature>
<feature type="region of interest" description="Disordered" evidence="2">
    <location>
        <begin position="501"/>
        <end position="723"/>
    </location>
</feature>
<feature type="coiled-coil region" evidence="1">
    <location>
        <begin position="522"/>
        <end position="551"/>
    </location>
</feature>
<feature type="coiled-coil region" evidence="1">
    <location>
        <begin position="656"/>
        <end position="723"/>
    </location>
</feature>
<feature type="compositionally biased region" description="Acidic residues" evidence="2">
    <location>
        <begin position="537"/>
        <end position="550"/>
    </location>
</feature>
<feature type="compositionally biased region" description="Acidic residues" evidence="2">
    <location>
        <begin position="588"/>
        <end position="600"/>
    </location>
</feature>
<feature type="compositionally biased region" description="Acidic residues" evidence="2">
    <location>
        <begin position="608"/>
        <end position="622"/>
    </location>
</feature>
<feature type="compositionally biased region" description="Basic and acidic residues" evidence="2">
    <location>
        <begin position="623"/>
        <end position="634"/>
    </location>
</feature>
<feature type="compositionally biased region" description="Basic and acidic residues" evidence="2">
    <location>
        <begin position="670"/>
        <end position="681"/>
    </location>
</feature>
<feature type="compositionally biased region" description="Basic and acidic residues" evidence="2">
    <location>
        <begin position="700"/>
        <end position="709"/>
    </location>
</feature>
<feature type="compositionally biased region" description="Basic residues" evidence="2">
    <location>
        <begin position="710"/>
        <end position="723"/>
    </location>
</feature>
<sequence length="723" mass="81815">MAGRLREERKYRQKNRGLVQERIRLSLVVWESRKQGTSGQAKNFITRTQAVRKLQISLPDFRRLCIFKGIYPREPRNKKKASKAATPSTTFYYTRDIQYLLHEPLLKKFREQKALSKKIARALGRGEVGNAARLEKNNAPKLSLDHIIKERYPTFIDALRDLDDALSLLFLFANLPSTTSVPAKTITLCQRLCHEFQHYLIATNSLRKSFLSIKGIYYQATILGQDIMWLVPYRFVQRVTGDVDYRIMGTFVEFYTTLLGFVNYKLYTSIGLVYPPKFDKSSDERGAELAAFTLEGRYFGEAHKAIETSRQPNGSAEKAATTSKELQAKVDNILEKTQLDTDPTDQSTEDQEENIEAIDKFEPIAPEADSLPQPQISGDEAGSLFATFTFYISREAPRAPLEFLLRSFGCKRIGWDSVLGDGAFTHDELDARITHQIVDRPQLPQASLPPLPKNPEDGTEAAPRPGTRVPGRTYIQPQWVWDCINEGKLLRPDLYAPGATLPPHLSPWVKPSERGYDPRASLADQEEEGEAERAAEAEEYENDEQEESGEESTKSKQSKELLANLARDSGDENTSGDESVNGGMDIAMAEDTDESSDDGDGADKFEGFDQDEDMSSESEDEEEKARSQHQKELEAEAAGLPFSASSQAESGTIRGKKQQAPLAKKRAAQKKKEEEELERQKMMMSRKKRKLLDKMIYSNKKQDAEAEKLRQKRRKIEQGLNKK</sequence>